<organism>
    <name type="scientific">Arabidopsis thaliana</name>
    <name type="common">Mouse-ear cress</name>
    <dbReference type="NCBI Taxonomy" id="3702"/>
    <lineage>
        <taxon>Eukaryota</taxon>
        <taxon>Viridiplantae</taxon>
        <taxon>Streptophyta</taxon>
        <taxon>Embryophyta</taxon>
        <taxon>Tracheophyta</taxon>
        <taxon>Spermatophyta</taxon>
        <taxon>Magnoliopsida</taxon>
        <taxon>eudicotyledons</taxon>
        <taxon>Gunneridae</taxon>
        <taxon>Pentapetalae</taxon>
        <taxon>rosids</taxon>
        <taxon>malvids</taxon>
        <taxon>Brassicales</taxon>
        <taxon>Brassicaceae</taxon>
        <taxon>Camelineae</taxon>
        <taxon>Arabidopsis</taxon>
    </lineage>
</organism>
<protein>
    <recommendedName>
        <fullName>Hsp70-Hsp90 organizing protein 3</fullName>
        <shortName>AtHop3</shortName>
    </recommendedName>
</protein>
<sequence length="558" mass="63706">MAEEAKSKGNAAFSSGDYATAITHFTEAINLSPTNHILYSNRSASYASLHRYEEALSDAKKTIELKPDWSKGYSRLGAAFIGLSKFDEAVDSYKKGLEIDPSNEMLKSGLADASRSRVSSKSNPFVDAFQGKEMWEKLTADPGTRVYLEQDDFVKTMKEIQRNPNNLNLYMKDKRVMKALGVLLNVKFGGSSGEDTEMKEADERKEPEPEMEPMELTEEERQKKERKEKALKEKGEGNVAYKKKDFGRAVEHYTKAMELDDEDISYLTNRAAVYLEMGKYEECIEDCDKAVERGRELRSDFKMIARALTRKGSALVKMARCSKDFEPAIETFQKALTEHRNPDTLKKLNDAEKVKKELEQQEYFDPTIAEEEREKGNGFFKEQKYPEAVKHYSEAIKRNPNDVRAYSNRAACYTKLGALPEGLKDAEKCIELDPSFTKGYSRKGAIQFFMKEYDKAMETYQEGLKHDPKNQEFLDGVRRCVEQINKASRGDLTPEELKERQAKAMQDPEVQNILSDPVMRQVLVDFQENPKAAQEHMKNPMVMNKIQKLVSAGIVQVR</sequence>
<feature type="chain" id="PRO_0000426703" description="Hsp70-Hsp90 organizing protein 3">
    <location>
        <begin position="1"/>
        <end position="558"/>
    </location>
</feature>
<feature type="repeat" description="TPR 1">
    <location>
        <begin position="2"/>
        <end position="35"/>
    </location>
</feature>
<feature type="repeat" description="TPR 2">
    <location>
        <begin position="37"/>
        <end position="69"/>
    </location>
</feature>
<feature type="repeat" description="TPR 3">
    <location>
        <begin position="70"/>
        <end position="103"/>
    </location>
</feature>
<feature type="domain" description="STI1 1">
    <location>
        <begin position="131"/>
        <end position="170"/>
    </location>
</feature>
<feature type="repeat" description="TPR 4">
    <location>
        <begin position="136"/>
        <end position="173"/>
    </location>
</feature>
<feature type="repeat" description="TPR 5">
    <location>
        <begin position="230"/>
        <end position="263"/>
    </location>
</feature>
<feature type="repeat" description="TPR 6">
    <location>
        <begin position="265"/>
        <end position="297"/>
    </location>
</feature>
<feature type="repeat" description="TPR 7">
    <location>
        <begin position="305"/>
        <end position="342"/>
    </location>
</feature>
<feature type="repeat" description="TPR 8">
    <location>
        <begin position="369"/>
        <end position="402"/>
    </location>
</feature>
<feature type="repeat" description="TPR 9">
    <location>
        <begin position="404"/>
        <end position="436"/>
    </location>
</feature>
<feature type="repeat" description="TPR 10">
    <location>
        <begin position="437"/>
        <end position="470"/>
    </location>
</feature>
<feature type="domain" description="STI1 2">
    <location>
        <begin position="507"/>
        <end position="546"/>
    </location>
</feature>
<feature type="region of interest" description="Disordered" evidence="3">
    <location>
        <begin position="191"/>
        <end position="232"/>
    </location>
</feature>
<feature type="short sequence motif" description="Bipartite nuclear localization signal" evidence="2">
    <location>
        <begin position="227"/>
        <end position="244"/>
    </location>
</feature>
<feature type="compositionally biased region" description="Basic and acidic residues" evidence="3">
    <location>
        <begin position="196"/>
        <end position="208"/>
    </location>
</feature>
<feature type="compositionally biased region" description="Acidic residues" evidence="3">
    <location>
        <begin position="209"/>
        <end position="218"/>
    </location>
</feature>
<feature type="compositionally biased region" description="Basic and acidic residues" evidence="3">
    <location>
        <begin position="219"/>
        <end position="232"/>
    </location>
</feature>
<feature type="splice variant" id="VSP_053940" description="In isoform 2." evidence="5">
    <original>LVDFQENP</original>
    <variation>KAVASIVF</variation>
    <location>
        <begin position="523"/>
        <end position="530"/>
    </location>
</feature>
<feature type="splice variant" id="VSP_053941" description="In isoform 2." evidence="5">
    <location>
        <begin position="531"/>
        <end position="558"/>
    </location>
</feature>
<feature type="sequence conflict" description="In Ref. 4; BAH19733." evidence="6" ref="4">
    <original>E</original>
    <variation>G</variation>
    <location>
        <position position="98"/>
    </location>
</feature>
<feature type="sequence conflict" description="In Ref. 3; AAM98143." evidence="6" ref="3">
    <original>E</original>
    <variation>K</variation>
    <location>
        <position position="374"/>
    </location>
</feature>
<comment type="function">
    <text evidence="1 4">Mediates the association of the molecular chaperones HSP70 and HSP90. Mediates nuclear encoded chloroplast preproteins binding to HSP90 prior to chloroplastic sorting (By similarity). Involved in acclimation to heat.</text>
</comment>
<comment type="subunit">
    <text evidence="1">Co-chaperone that forms a complex with HSP70 and HSP90 and preproteins (e.g. chloroplast preproteins) (By similarity).</text>
</comment>
<comment type="subcellular location">
    <subcellularLocation>
        <location evidence="1">Cytoplasm</location>
    </subcellularLocation>
    <subcellularLocation>
        <location evidence="1">Nucleus</location>
    </subcellularLocation>
</comment>
<comment type="alternative products">
    <event type="alternative splicing"/>
    <isoform>
        <id>Q9STH1-1</id>
        <name>1</name>
        <sequence type="displayed"/>
    </isoform>
    <isoform>
        <id>Q9STH1-2</id>
        <name>2</name>
        <sequence type="described" ref="VSP_053940 VSP_053941"/>
    </isoform>
</comment>
<comment type="domain">
    <text evidence="1">The tetratricopeptide repeat (TPR) domain, forming a carboxylate clamp (CC), mediates interaction with the highly conserved 'EEVD' motif at the C-terminal ends of HSP90 and HSP70.</text>
</comment>
<comment type="PTM">
    <text evidence="1">Phosphorylated.</text>
</comment>
<comment type="PTM">
    <text evidence="1">Acetylated.</text>
</comment>
<comment type="disruption phenotype">
    <text evidence="4">Decreased thermotolerance after a long recovery (2 days) under nonstress conditions following an acclimation heat treatment.</text>
</comment>
<dbReference type="EMBL" id="AL080318">
    <property type="protein sequence ID" value="CAB45987.1"/>
    <property type="molecule type" value="Genomic_DNA"/>
</dbReference>
<dbReference type="EMBL" id="AL161534">
    <property type="protein sequence ID" value="CAB78283.1"/>
    <property type="molecule type" value="Genomic_DNA"/>
</dbReference>
<dbReference type="EMBL" id="CP002687">
    <property type="protein sequence ID" value="AEE83125.1"/>
    <property type="molecule type" value="Genomic_DNA"/>
</dbReference>
<dbReference type="EMBL" id="CP002687">
    <property type="protein sequence ID" value="AEE83126.1"/>
    <property type="molecule type" value="Genomic_DNA"/>
</dbReference>
<dbReference type="EMBL" id="AY140001">
    <property type="protein sequence ID" value="AAM98143.1"/>
    <property type="molecule type" value="mRNA"/>
</dbReference>
<dbReference type="EMBL" id="AK317040">
    <property type="protein sequence ID" value="BAH19733.1"/>
    <property type="molecule type" value="mRNA"/>
</dbReference>
<dbReference type="PIR" id="T48150">
    <property type="entry name" value="T48150"/>
</dbReference>
<dbReference type="RefSeq" id="NP_001031620.1">
    <molecule id="Q9STH1-1"/>
    <property type="nucleotide sequence ID" value="NM_001036543.2"/>
</dbReference>
<dbReference type="RefSeq" id="NP_192977.2">
    <molecule id="Q9STH1-2"/>
    <property type="nucleotide sequence ID" value="NM_117310.4"/>
</dbReference>
<dbReference type="SMR" id="Q9STH1"/>
<dbReference type="BioGRID" id="12147">
    <property type="interactions" value="15"/>
</dbReference>
<dbReference type="FunCoup" id="Q9STH1">
    <property type="interactions" value="3338"/>
</dbReference>
<dbReference type="STRING" id="3702.Q9STH1"/>
<dbReference type="iPTMnet" id="Q9STH1"/>
<dbReference type="PaxDb" id="3702-AT4G12400.2"/>
<dbReference type="ProteomicsDB" id="228752">
    <molecule id="Q9STH1-1"/>
</dbReference>
<dbReference type="EnsemblPlants" id="AT4G12400.1">
    <molecule id="Q9STH1-2"/>
    <property type="protein sequence ID" value="AT4G12400.1"/>
    <property type="gene ID" value="AT4G12400"/>
</dbReference>
<dbReference type="EnsemblPlants" id="AT4G12400.2">
    <molecule id="Q9STH1-1"/>
    <property type="protein sequence ID" value="AT4G12400.2"/>
    <property type="gene ID" value="AT4G12400"/>
</dbReference>
<dbReference type="GeneID" id="826849"/>
<dbReference type="Gramene" id="AT4G12400.1">
    <molecule id="Q9STH1-2"/>
    <property type="protein sequence ID" value="AT4G12400.1"/>
    <property type="gene ID" value="AT4G12400"/>
</dbReference>
<dbReference type="Gramene" id="AT4G12400.2">
    <molecule id="Q9STH1-1"/>
    <property type="protein sequence ID" value="AT4G12400.2"/>
    <property type="gene ID" value="AT4G12400"/>
</dbReference>
<dbReference type="KEGG" id="ath:AT4G12400"/>
<dbReference type="Araport" id="AT4G12400"/>
<dbReference type="TAIR" id="AT4G12400">
    <property type="gene designation" value="HOP3"/>
</dbReference>
<dbReference type="eggNOG" id="KOG0548">
    <property type="taxonomic scope" value="Eukaryota"/>
</dbReference>
<dbReference type="HOGENOM" id="CLU_000134_46_5_1"/>
<dbReference type="InParanoid" id="Q9STH1"/>
<dbReference type="OMA" id="MYSAREN"/>
<dbReference type="PhylomeDB" id="Q9STH1"/>
<dbReference type="PRO" id="PR:Q9STH1"/>
<dbReference type="Proteomes" id="UP000006548">
    <property type="component" value="Chromosome 4"/>
</dbReference>
<dbReference type="ExpressionAtlas" id="Q9STH1">
    <property type="expression patterns" value="baseline and differential"/>
</dbReference>
<dbReference type="GO" id="GO:0005829">
    <property type="term" value="C:cytosol"/>
    <property type="evidence" value="ECO:0007005"/>
    <property type="project" value="TAIR"/>
</dbReference>
<dbReference type="GO" id="GO:0005634">
    <property type="term" value="C:nucleus"/>
    <property type="evidence" value="ECO:0007669"/>
    <property type="project" value="UniProtKB-SubCell"/>
</dbReference>
<dbReference type="GO" id="GO:0051879">
    <property type="term" value="F:Hsp90 protein binding"/>
    <property type="evidence" value="ECO:0000250"/>
    <property type="project" value="UniProtKB"/>
</dbReference>
<dbReference type="GO" id="GO:0070678">
    <property type="term" value="F:preprotein binding"/>
    <property type="evidence" value="ECO:0000250"/>
    <property type="project" value="UniProtKB"/>
</dbReference>
<dbReference type="GO" id="GO:0051131">
    <property type="term" value="P:chaperone-mediated protein complex assembly"/>
    <property type="evidence" value="ECO:0000250"/>
    <property type="project" value="UniProtKB"/>
</dbReference>
<dbReference type="GO" id="GO:0010286">
    <property type="term" value="P:heat acclimation"/>
    <property type="evidence" value="ECO:0000315"/>
    <property type="project" value="UniProtKB"/>
</dbReference>
<dbReference type="FunFam" id="1.25.40.10:FF:000102">
    <property type="entry name" value="hsp70-Hsp90 organizing protein 3-like"/>
    <property type="match status" value="1"/>
</dbReference>
<dbReference type="FunFam" id="1.10.260.100:FF:000004">
    <property type="entry name" value="Putative stress-induced-phosphoprotein 1"/>
    <property type="match status" value="1"/>
</dbReference>
<dbReference type="FunFam" id="1.25.40.10:FF:000010">
    <property type="entry name" value="Stress-induced phosphoprotein 1"/>
    <property type="match status" value="1"/>
</dbReference>
<dbReference type="FunFam" id="1.25.40.10:FF:000020">
    <property type="entry name" value="Stress-induced phosphoprotein 1"/>
    <property type="match status" value="1"/>
</dbReference>
<dbReference type="FunFam" id="1.10.260.100:FF:000002">
    <property type="entry name" value="Stress-induced-phosphoprotein 1 (Hsp70/Hsp90-organizing)"/>
    <property type="match status" value="1"/>
</dbReference>
<dbReference type="Gene3D" id="1.10.260.100">
    <property type="match status" value="2"/>
</dbReference>
<dbReference type="Gene3D" id="1.25.40.10">
    <property type="entry name" value="Tetratricopeptide repeat domain"/>
    <property type="match status" value="3"/>
</dbReference>
<dbReference type="InterPro" id="IPR041243">
    <property type="entry name" value="STI1/HOP_DP"/>
</dbReference>
<dbReference type="InterPro" id="IPR006636">
    <property type="entry name" value="STI1_HS-bd"/>
</dbReference>
<dbReference type="InterPro" id="IPR011990">
    <property type="entry name" value="TPR-like_helical_dom_sf"/>
</dbReference>
<dbReference type="InterPro" id="IPR019734">
    <property type="entry name" value="TPR_rpt"/>
</dbReference>
<dbReference type="PANTHER" id="PTHR22904:SF533">
    <property type="entry name" value="HSP70-HSP90 ORGANIZING PROTEIN 3"/>
    <property type="match status" value="1"/>
</dbReference>
<dbReference type="PANTHER" id="PTHR22904">
    <property type="entry name" value="TPR REPEAT CONTAINING PROTEIN"/>
    <property type="match status" value="1"/>
</dbReference>
<dbReference type="Pfam" id="PF17830">
    <property type="entry name" value="STI1-HOP_DP"/>
    <property type="match status" value="2"/>
</dbReference>
<dbReference type="Pfam" id="PF00515">
    <property type="entry name" value="TPR_1"/>
    <property type="match status" value="3"/>
</dbReference>
<dbReference type="Pfam" id="PF13414">
    <property type="entry name" value="TPR_11"/>
    <property type="match status" value="1"/>
</dbReference>
<dbReference type="Pfam" id="PF13432">
    <property type="entry name" value="TPR_16"/>
    <property type="match status" value="1"/>
</dbReference>
<dbReference type="SMART" id="SM00727">
    <property type="entry name" value="STI1"/>
    <property type="match status" value="2"/>
</dbReference>
<dbReference type="SMART" id="SM00028">
    <property type="entry name" value="TPR"/>
    <property type="match status" value="9"/>
</dbReference>
<dbReference type="SUPFAM" id="SSF48452">
    <property type="entry name" value="TPR-like"/>
    <property type="match status" value="3"/>
</dbReference>
<dbReference type="PROSITE" id="PS50005">
    <property type="entry name" value="TPR"/>
    <property type="match status" value="9"/>
</dbReference>
<dbReference type="PROSITE" id="PS50293">
    <property type="entry name" value="TPR_REGION"/>
    <property type="match status" value="1"/>
</dbReference>
<gene>
    <name type="primary">HOP3</name>
    <name type="ordered locus">At4g12400</name>
    <name type="ORF">T4C9.240</name>
</gene>
<accession>Q9STH1</accession>
<accession>B9DG66</accession>
<accession>F4JQM6</accession>
<accession>Q8L724</accession>
<name>HSOP3_ARATH</name>
<proteinExistence type="evidence at transcript level"/>
<reference key="1">
    <citation type="journal article" date="1999" name="Nature">
        <title>Sequence and analysis of chromosome 4 of the plant Arabidopsis thaliana.</title>
        <authorList>
            <person name="Mayer K.F.X."/>
            <person name="Schueller C."/>
            <person name="Wambutt R."/>
            <person name="Murphy G."/>
            <person name="Volckaert G."/>
            <person name="Pohl T."/>
            <person name="Duesterhoeft A."/>
            <person name="Stiekema W."/>
            <person name="Entian K.-D."/>
            <person name="Terryn N."/>
            <person name="Harris B."/>
            <person name="Ansorge W."/>
            <person name="Brandt P."/>
            <person name="Grivell L.A."/>
            <person name="Rieger M."/>
            <person name="Weichselgartner M."/>
            <person name="de Simone V."/>
            <person name="Obermaier B."/>
            <person name="Mache R."/>
            <person name="Mueller M."/>
            <person name="Kreis M."/>
            <person name="Delseny M."/>
            <person name="Puigdomenech P."/>
            <person name="Watson M."/>
            <person name="Schmidtheini T."/>
            <person name="Reichert B."/>
            <person name="Portetelle D."/>
            <person name="Perez-Alonso M."/>
            <person name="Boutry M."/>
            <person name="Bancroft I."/>
            <person name="Vos P."/>
            <person name="Hoheisel J."/>
            <person name="Zimmermann W."/>
            <person name="Wedler H."/>
            <person name="Ridley P."/>
            <person name="Langham S.-A."/>
            <person name="McCullagh B."/>
            <person name="Bilham L."/>
            <person name="Robben J."/>
            <person name="van der Schueren J."/>
            <person name="Grymonprez B."/>
            <person name="Chuang Y.-J."/>
            <person name="Vandenbussche F."/>
            <person name="Braeken M."/>
            <person name="Weltjens I."/>
            <person name="Voet M."/>
            <person name="Bastiaens I."/>
            <person name="Aert R."/>
            <person name="Defoor E."/>
            <person name="Weitzenegger T."/>
            <person name="Bothe G."/>
            <person name="Ramsperger U."/>
            <person name="Hilbert H."/>
            <person name="Braun M."/>
            <person name="Holzer E."/>
            <person name="Brandt A."/>
            <person name="Peters S."/>
            <person name="van Staveren M."/>
            <person name="Dirkse W."/>
            <person name="Mooijman P."/>
            <person name="Klein Lankhorst R."/>
            <person name="Rose M."/>
            <person name="Hauf J."/>
            <person name="Koetter P."/>
            <person name="Berneiser S."/>
            <person name="Hempel S."/>
            <person name="Feldpausch M."/>
            <person name="Lamberth S."/>
            <person name="Van den Daele H."/>
            <person name="De Keyser A."/>
            <person name="Buysshaert C."/>
            <person name="Gielen J."/>
            <person name="Villarroel R."/>
            <person name="De Clercq R."/>
            <person name="van Montagu M."/>
            <person name="Rogers J."/>
            <person name="Cronin A."/>
            <person name="Quail M.A."/>
            <person name="Bray-Allen S."/>
            <person name="Clark L."/>
            <person name="Doggett J."/>
            <person name="Hall S."/>
            <person name="Kay M."/>
            <person name="Lennard N."/>
            <person name="McLay K."/>
            <person name="Mayes R."/>
            <person name="Pettett A."/>
            <person name="Rajandream M.A."/>
            <person name="Lyne M."/>
            <person name="Benes V."/>
            <person name="Rechmann S."/>
            <person name="Borkova D."/>
            <person name="Bloecker H."/>
            <person name="Scharfe M."/>
            <person name="Grimm M."/>
            <person name="Loehnert T.-H."/>
            <person name="Dose S."/>
            <person name="de Haan M."/>
            <person name="Maarse A.C."/>
            <person name="Schaefer M."/>
            <person name="Mueller-Auer S."/>
            <person name="Gabel C."/>
            <person name="Fuchs M."/>
            <person name="Fartmann B."/>
            <person name="Granderath K."/>
            <person name="Dauner D."/>
            <person name="Herzl A."/>
            <person name="Neumann S."/>
            <person name="Argiriou A."/>
            <person name="Vitale D."/>
            <person name="Liguori R."/>
            <person name="Piravandi E."/>
            <person name="Massenet O."/>
            <person name="Quigley F."/>
            <person name="Clabauld G."/>
            <person name="Muendlein A."/>
            <person name="Felber R."/>
            <person name="Schnabl S."/>
            <person name="Hiller R."/>
            <person name="Schmidt W."/>
            <person name="Lecharny A."/>
            <person name="Aubourg S."/>
            <person name="Chefdor F."/>
            <person name="Cooke R."/>
            <person name="Berger C."/>
            <person name="Monfort A."/>
            <person name="Casacuberta E."/>
            <person name="Gibbons T."/>
            <person name="Weber N."/>
            <person name="Vandenbol M."/>
            <person name="Bargues M."/>
            <person name="Terol J."/>
            <person name="Torres A."/>
            <person name="Perez-Perez A."/>
            <person name="Purnelle B."/>
            <person name="Bent E."/>
            <person name="Johnson S."/>
            <person name="Tacon D."/>
            <person name="Jesse T."/>
            <person name="Heijnen L."/>
            <person name="Schwarz S."/>
            <person name="Scholler P."/>
            <person name="Heber S."/>
            <person name="Francs P."/>
            <person name="Bielke C."/>
            <person name="Frishman D."/>
            <person name="Haase D."/>
            <person name="Lemcke K."/>
            <person name="Mewes H.-W."/>
            <person name="Stocker S."/>
            <person name="Zaccaria P."/>
            <person name="Bevan M."/>
            <person name="Wilson R.K."/>
            <person name="de la Bastide M."/>
            <person name="Habermann K."/>
            <person name="Parnell L."/>
            <person name="Dedhia N."/>
            <person name="Gnoj L."/>
            <person name="Schutz K."/>
            <person name="Huang E."/>
            <person name="Spiegel L."/>
            <person name="Sekhon M."/>
            <person name="Murray J."/>
            <person name="Sheet P."/>
            <person name="Cordes M."/>
            <person name="Abu-Threideh J."/>
            <person name="Stoneking T."/>
            <person name="Kalicki J."/>
            <person name="Graves T."/>
            <person name="Harmon G."/>
            <person name="Edwards J."/>
            <person name="Latreille P."/>
            <person name="Courtney L."/>
            <person name="Cloud J."/>
            <person name="Abbott A."/>
            <person name="Scott K."/>
            <person name="Johnson D."/>
            <person name="Minx P."/>
            <person name="Bentley D."/>
            <person name="Fulton B."/>
            <person name="Miller N."/>
            <person name="Greco T."/>
            <person name="Kemp K."/>
            <person name="Kramer J."/>
            <person name="Fulton L."/>
            <person name="Mardis E."/>
            <person name="Dante M."/>
            <person name="Pepin K."/>
            <person name="Hillier L.W."/>
            <person name="Nelson J."/>
            <person name="Spieth J."/>
            <person name="Ryan E."/>
            <person name="Andrews S."/>
            <person name="Geisel C."/>
            <person name="Layman D."/>
            <person name="Du H."/>
            <person name="Ali J."/>
            <person name="Berghoff A."/>
            <person name="Jones K."/>
            <person name="Drone K."/>
            <person name="Cotton M."/>
            <person name="Joshu C."/>
            <person name="Antonoiu B."/>
            <person name="Zidanic M."/>
            <person name="Strong C."/>
            <person name="Sun H."/>
            <person name="Lamar B."/>
            <person name="Yordan C."/>
            <person name="Ma P."/>
            <person name="Zhong J."/>
            <person name="Preston R."/>
            <person name="Vil D."/>
            <person name="Shekher M."/>
            <person name="Matero A."/>
            <person name="Shah R."/>
            <person name="Swaby I.K."/>
            <person name="O'Shaughnessy A."/>
            <person name="Rodriguez M."/>
            <person name="Hoffman J."/>
            <person name="Till S."/>
            <person name="Granat S."/>
            <person name="Shohdy N."/>
            <person name="Hasegawa A."/>
            <person name="Hameed A."/>
            <person name="Lodhi M."/>
            <person name="Johnson A."/>
            <person name="Chen E."/>
            <person name="Marra M.A."/>
            <person name="Martienssen R."/>
            <person name="McCombie W.R."/>
        </authorList>
    </citation>
    <scope>NUCLEOTIDE SEQUENCE [LARGE SCALE GENOMIC DNA]</scope>
    <source>
        <strain>cv. Columbia</strain>
    </source>
</reference>
<reference key="2">
    <citation type="journal article" date="2017" name="Plant J.">
        <title>Araport11: a complete reannotation of the Arabidopsis thaliana reference genome.</title>
        <authorList>
            <person name="Cheng C.Y."/>
            <person name="Krishnakumar V."/>
            <person name="Chan A.P."/>
            <person name="Thibaud-Nissen F."/>
            <person name="Schobel S."/>
            <person name="Town C.D."/>
        </authorList>
    </citation>
    <scope>GENOME REANNOTATION</scope>
    <source>
        <strain>cv. Columbia</strain>
    </source>
</reference>
<reference key="3">
    <citation type="journal article" date="2003" name="Science">
        <title>Empirical analysis of transcriptional activity in the Arabidopsis genome.</title>
        <authorList>
            <person name="Yamada K."/>
            <person name="Lim J."/>
            <person name="Dale J.M."/>
            <person name="Chen H."/>
            <person name="Shinn P."/>
            <person name="Palm C.J."/>
            <person name="Southwick A.M."/>
            <person name="Wu H.C."/>
            <person name="Kim C.J."/>
            <person name="Nguyen M."/>
            <person name="Pham P.K."/>
            <person name="Cheuk R.F."/>
            <person name="Karlin-Newmann G."/>
            <person name="Liu S.X."/>
            <person name="Lam B."/>
            <person name="Sakano H."/>
            <person name="Wu T."/>
            <person name="Yu G."/>
            <person name="Miranda M."/>
            <person name="Quach H.L."/>
            <person name="Tripp M."/>
            <person name="Chang C.H."/>
            <person name="Lee J.M."/>
            <person name="Toriumi M.J."/>
            <person name="Chan M.M."/>
            <person name="Tang C.C."/>
            <person name="Onodera C.S."/>
            <person name="Deng J.M."/>
            <person name="Akiyama K."/>
            <person name="Ansari Y."/>
            <person name="Arakawa T."/>
            <person name="Banh J."/>
            <person name="Banno F."/>
            <person name="Bowser L."/>
            <person name="Brooks S.Y."/>
            <person name="Carninci P."/>
            <person name="Chao Q."/>
            <person name="Choy N."/>
            <person name="Enju A."/>
            <person name="Goldsmith A.D."/>
            <person name="Gurjal M."/>
            <person name="Hansen N.F."/>
            <person name="Hayashizaki Y."/>
            <person name="Johnson-Hopson C."/>
            <person name="Hsuan V.W."/>
            <person name="Iida K."/>
            <person name="Karnes M."/>
            <person name="Khan S."/>
            <person name="Koesema E."/>
            <person name="Ishida J."/>
            <person name="Jiang P.X."/>
            <person name="Jones T."/>
            <person name="Kawai J."/>
            <person name="Kamiya A."/>
            <person name="Meyers C."/>
            <person name="Nakajima M."/>
            <person name="Narusaka M."/>
            <person name="Seki M."/>
            <person name="Sakurai T."/>
            <person name="Satou M."/>
            <person name="Tamse R."/>
            <person name="Vaysberg M."/>
            <person name="Wallender E.K."/>
            <person name="Wong C."/>
            <person name="Yamamura Y."/>
            <person name="Yuan S."/>
            <person name="Shinozaki K."/>
            <person name="Davis R.W."/>
            <person name="Theologis A."/>
            <person name="Ecker J.R."/>
        </authorList>
    </citation>
    <scope>NUCLEOTIDE SEQUENCE [LARGE SCALE MRNA] (ISOFORM 2)</scope>
    <source>
        <strain>cv. Columbia</strain>
    </source>
</reference>
<reference key="4">
    <citation type="journal article" date="2009" name="DNA Res.">
        <title>Analysis of multiple occurrences of alternative splicing events in Arabidopsis thaliana using novel sequenced full-length cDNAs.</title>
        <authorList>
            <person name="Iida K."/>
            <person name="Fukami-Kobayashi K."/>
            <person name="Toyoda A."/>
            <person name="Sakaki Y."/>
            <person name="Kobayashi M."/>
            <person name="Seki M."/>
            <person name="Shinozaki K."/>
        </authorList>
    </citation>
    <scope>NUCLEOTIDE SEQUENCE [LARGE SCALE MRNA] (ISOFORM 1)</scope>
    <source>
        <strain>cv. Columbia</strain>
        <tissue>Rosette leaf</tissue>
    </source>
</reference>
<reference key="5">
    <citation type="journal article" date="2007" name="Plant Physiol.">
        <title>A heat-inducible transcription factor, HsfA2, is required for extension of acquired thermotolerance in Arabidopsis.</title>
        <authorList>
            <person name="Charng Y.-Y."/>
            <person name="Liu H.-C."/>
            <person name="Liu N.-Y."/>
            <person name="Chi W.-T."/>
            <person name="Wang C.-N."/>
            <person name="Chang S.-H."/>
            <person name="Wang T.-T."/>
        </authorList>
    </citation>
    <scope>FUNCTION</scope>
    <scope>DISRUPTION PHENOTYPE</scope>
</reference>
<reference key="6">
    <citation type="journal article" date="2010" name="PLoS ONE">
        <title>In silico identification of carboxylate clamp type tetratricopeptide repeat proteins in Arabidopsis and rice as putative co-chaperones of Hsp90/Hsp70.</title>
        <authorList>
            <person name="Prasad B.D."/>
            <person name="Goel S."/>
            <person name="Krishna P."/>
        </authorList>
    </citation>
    <scope>GENE FAMILY</scope>
    <scope>NOMENCLATURE</scope>
</reference>
<keyword id="KW-0007">Acetylation</keyword>
<keyword id="KW-0025">Alternative splicing</keyword>
<keyword id="KW-0143">Chaperone</keyword>
<keyword id="KW-0963">Cytoplasm</keyword>
<keyword id="KW-0539">Nucleus</keyword>
<keyword id="KW-0597">Phosphoprotein</keyword>
<keyword id="KW-1185">Reference proteome</keyword>
<keyword id="KW-0677">Repeat</keyword>
<keyword id="KW-0346">Stress response</keyword>
<keyword id="KW-0802">TPR repeat</keyword>
<evidence type="ECO:0000250" key="1"/>
<evidence type="ECO:0000255" key="2"/>
<evidence type="ECO:0000256" key="3">
    <source>
        <dbReference type="SAM" id="MobiDB-lite"/>
    </source>
</evidence>
<evidence type="ECO:0000269" key="4">
    <source>
    </source>
</evidence>
<evidence type="ECO:0000303" key="5">
    <source>
    </source>
</evidence>
<evidence type="ECO:0000305" key="6"/>